<comment type="function">
    <text evidence="1">Responsible for synthesis of pseudouridine from uracil-13 in transfer RNAs.</text>
</comment>
<comment type="catalytic activity">
    <reaction evidence="1">
        <text>uridine(13) in tRNA = pseudouridine(13) in tRNA</text>
        <dbReference type="Rhea" id="RHEA:42540"/>
        <dbReference type="Rhea" id="RHEA-COMP:10105"/>
        <dbReference type="Rhea" id="RHEA-COMP:10106"/>
        <dbReference type="ChEBI" id="CHEBI:65314"/>
        <dbReference type="ChEBI" id="CHEBI:65315"/>
        <dbReference type="EC" id="5.4.99.27"/>
    </reaction>
</comment>
<comment type="similarity">
    <text evidence="1">Belongs to the pseudouridine synthase TruD family.</text>
</comment>
<evidence type="ECO:0000255" key="1">
    <source>
        <dbReference type="HAMAP-Rule" id="MF_01082"/>
    </source>
</evidence>
<keyword id="KW-0413">Isomerase</keyword>
<keyword id="KW-0819">tRNA processing</keyword>
<name>TRUD_ECOUT</name>
<dbReference type="EC" id="5.4.99.27" evidence="1"/>
<dbReference type="EMBL" id="CP000243">
    <property type="protein sequence ID" value="ABE08568.1"/>
    <property type="molecule type" value="Genomic_DNA"/>
</dbReference>
<dbReference type="RefSeq" id="WP_000568928.1">
    <property type="nucleotide sequence ID" value="NZ_CP064825.1"/>
</dbReference>
<dbReference type="SMR" id="Q1R7U6"/>
<dbReference type="KEGG" id="eci:UTI89_C3116"/>
<dbReference type="HOGENOM" id="CLU_005281_4_0_6"/>
<dbReference type="Proteomes" id="UP000001952">
    <property type="component" value="Chromosome"/>
</dbReference>
<dbReference type="GO" id="GO:0005829">
    <property type="term" value="C:cytosol"/>
    <property type="evidence" value="ECO:0007669"/>
    <property type="project" value="TreeGrafter"/>
</dbReference>
<dbReference type="GO" id="GO:0003723">
    <property type="term" value="F:RNA binding"/>
    <property type="evidence" value="ECO:0007669"/>
    <property type="project" value="InterPro"/>
</dbReference>
<dbReference type="GO" id="GO:0160150">
    <property type="term" value="F:tRNA pseudouridine(13) synthase activity"/>
    <property type="evidence" value="ECO:0007669"/>
    <property type="project" value="UniProtKB-EC"/>
</dbReference>
<dbReference type="GO" id="GO:0031119">
    <property type="term" value="P:tRNA pseudouridine synthesis"/>
    <property type="evidence" value="ECO:0007669"/>
    <property type="project" value="UniProtKB-UniRule"/>
</dbReference>
<dbReference type="CDD" id="cd02575">
    <property type="entry name" value="PseudoU_synth_EcTruD"/>
    <property type="match status" value="1"/>
</dbReference>
<dbReference type="FunFam" id="3.30.2340.10:FF:000001">
    <property type="entry name" value="tRNA pseudouridine synthase D"/>
    <property type="match status" value="1"/>
</dbReference>
<dbReference type="FunFam" id="3.30.2350.20:FF:000001">
    <property type="entry name" value="tRNA pseudouridine synthase D"/>
    <property type="match status" value="1"/>
</dbReference>
<dbReference type="Gene3D" id="3.30.2350.20">
    <property type="entry name" value="TruD, catalytic domain"/>
    <property type="match status" value="1"/>
</dbReference>
<dbReference type="Gene3D" id="3.30.2340.10">
    <property type="entry name" value="TruD, insertion domain"/>
    <property type="match status" value="1"/>
</dbReference>
<dbReference type="HAMAP" id="MF_01082">
    <property type="entry name" value="TruD"/>
    <property type="match status" value="1"/>
</dbReference>
<dbReference type="InterPro" id="IPR020103">
    <property type="entry name" value="PsdUridine_synth_cat_dom_sf"/>
</dbReference>
<dbReference type="InterPro" id="IPR001656">
    <property type="entry name" value="PsdUridine_synth_TruD"/>
</dbReference>
<dbReference type="InterPro" id="IPR020119">
    <property type="entry name" value="PsdUridine_synth_TruD_CS"/>
</dbReference>
<dbReference type="InterPro" id="IPR011760">
    <property type="entry name" value="PsdUridine_synth_TruD_insert"/>
</dbReference>
<dbReference type="InterPro" id="IPR042214">
    <property type="entry name" value="TruD_catalytic"/>
</dbReference>
<dbReference type="InterPro" id="IPR043165">
    <property type="entry name" value="TruD_insert_sf"/>
</dbReference>
<dbReference type="InterPro" id="IPR050170">
    <property type="entry name" value="TruD_pseudoU_synthase"/>
</dbReference>
<dbReference type="NCBIfam" id="NF002155">
    <property type="entry name" value="PRK00984.1-4"/>
    <property type="match status" value="1"/>
</dbReference>
<dbReference type="NCBIfam" id="TIGR00094">
    <property type="entry name" value="tRNA_TruD_broad"/>
    <property type="match status" value="1"/>
</dbReference>
<dbReference type="PANTHER" id="PTHR47811">
    <property type="entry name" value="TRNA PSEUDOURIDINE SYNTHASE D"/>
    <property type="match status" value="1"/>
</dbReference>
<dbReference type="PANTHER" id="PTHR47811:SF1">
    <property type="entry name" value="TRNA PSEUDOURIDINE SYNTHASE D"/>
    <property type="match status" value="1"/>
</dbReference>
<dbReference type="Pfam" id="PF01142">
    <property type="entry name" value="TruD"/>
    <property type="match status" value="2"/>
</dbReference>
<dbReference type="SUPFAM" id="SSF55120">
    <property type="entry name" value="Pseudouridine synthase"/>
    <property type="match status" value="1"/>
</dbReference>
<dbReference type="PROSITE" id="PS50984">
    <property type="entry name" value="TRUD"/>
    <property type="match status" value="1"/>
</dbReference>
<dbReference type="PROSITE" id="PS01268">
    <property type="entry name" value="UPF0024"/>
    <property type="match status" value="1"/>
</dbReference>
<gene>
    <name evidence="1" type="primary">truD</name>
    <name type="ordered locus">UTI89_C3116</name>
</gene>
<feature type="chain" id="PRO_1000084739" description="tRNA pseudouridine synthase D">
    <location>
        <begin position="1"/>
        <end position="349"/>
    </location>
</feature>
<feature type="domain" description="TRUD" evidence="1">
    <location>
        <begin position="155"/>
        <end position="303"/>
    </location>
</feature>
<feature type="active site" description="Nucleophile" evidence="1">
    <location>
        <position position="80"/>
    </location>
</feature>
<feature type="binding site" evidence="1">
    <location>
        <position position="27"/>
    </location>
    <ligand>
        <name>substrate</name>
    </ligand>
</feature>
<feature type="binding site" evidence="1">
    <location>
        <position position="129"/>
    </location>
    <ligand>
        <name>substrate</name>
    </ligand>
</feature>
<feature type="binding site" evidence="1">
    <location>
        <position position="329"/>
    </location>
    <ligand>
        <name>substrate</name>
    </ligand>
</feature>
<accession>Q1R7U6</accession>
<proteinExistence type="inferred from homology"/>
<reference key="1">
    <citation type="journal article" date="2006" name="Proc. Natl. Acad. Sci. U.S.A.">
        <title>Identification of genes subject to positive selection in uropathogenic strains of Escherichia coli: a comparative genomics approach.</title>
        <authorList>
            <person name="Chen S.L."/>
            <person name="Hung C.-S."/>
            <person name="Xu J."/>
            <person name="Reigstad C.S."/>
            <person name="Magrini V."/>
            <person name="Sabo A."/>
            <person name="Blasiar D."/>
            <person name="Bieri T."/>
            <person name="Meyer R.R."/>
            <person name="Ozersky P."/>
            <person name="Armstrong J.R."/>
            <person name="Fulton R.S."/>
            <person name="Latreille J.P."/>
            <person name="Spieth J."/>
            <person name="Hooton T.M."/>
            <person name="Mardis E.R."/>
            <person name="Hultgren S.J."/>
            <person name="Gordon J.I."/>
        </authorList>
    </citation>
    <scope>NUCLEOTIDE SEQUENCE [LARGE SCALE GENOMIC DNA]</scope>
    <source>
        <strain>UTI89 / UPEC</strain>
    </source>
</reference>
<protein>
    <recommendedName>
        <fullName evidence="1">tRNA pseudouridine synthase D</fullName>
        <ecNumber evidence="1">5.4.99.27</ecNumber>
    </recommendedName>
    <alternativeName>
        <fullName evidence="1">tRNA pseudouridine(13) synthase</fullName>
    </alternativeName>
    <alternativeName>
        <fullName evidence="1">tRNA pseudouridylate synthase D</fullName>
    </alternativeName>
    <alternativeName>
        <fullName evidence="1">tRNA-uridine isomerase D</fullName>
    </alternativeName>
</protein>
<sequence>MIEFDNLTYLHGKPQGTGLLKANPEDFVVVEDLGFEPDGEGEHILVRILKNGCNTRFVADALAKFLKIHAREVSFAGQKDKHAVTEQWLCARVPGKEMPDLSAFQLEGCQVLEYARHKRKLRLGALKGNAFTLVLREVSNRDDVEQRLIDICVKGVPNYFGAQRFGIGGSNLQGALRWAQTNTPVRDRNKRSFWLSAARSALFNQIVAERLKKADVNQVVDGDALQLAGRGSWFVATTEELAELQRRVNDKELMITAALPGSGEWGTQREALAFEQAAVAEETELQTLLVREKVEAARRAMLLYPQQLSWNWWDDVTVEIHFWLPAGSFATSVVRELINTTGDYAHIAE</sequence>
<organism>
    <name type="scientific">Escherichia coli (strain UTI89 / UPEC)</name>
    <dbReference type="NCBI Taxonomy" id="364106"/>
    <lineage>
        <taxon>Bacteria</taxon>
        <taxon>Pseudomonadati</taxon>
        <taxon>Pseudomonadota</taxon>
        <taxon>Gammaproteobacteria</taxon>
        <taxon>Enterobacterales</taxon>
        <taxon>Enterobacteriaceae</taxon>
        <taxon>Escherichia</taxon>
    </lineage>
</organism>